<sequence>MKTIILALALIALVSSTQSDVIDTIKKIDQSPFGRTLFDTIWLELQTGDPLDRLVSTLTDLEDRYVAEQKEDDAKNQEYQGACTVDITAFDKDLAESNRKKIELEARLEGQLYPQRSILEGLVAQKKAEVKGYQKDLDELDAQRAEEHEDFEEKVLEHQEATAIIAEARRLFADNIEHESFVQKGKAAKQPHKFTKDVANLIQKHFTTSAKKTAKFQHRKGYSKLFKAFATIASKVEQLADAGAVQKIIDLADELLAKISDSLSLLRFAEDKRVESYKKSRNFVVIALNVAGSALANAISDLAALNDIIAQVEASLDTTVQRIENVSADRHDRFTQCEEAVQDYSDARSARQSDRDVVSQTIGLVNKELRTLREQLALRQQAGEQI</sequence>
<feature type="signal peptide" evidence="2">
    <location>
        <begin position="1"/>
        <end position="19"/>
    </location>
</feature>
<feature type="propeptide" id="PRO_0000307849" evidence="1">
    <location>
        <begin position="20"/>
        <end position="48"/>
    </location>
</feature>
<feature type="chain" id="PRO_0000221509" description="Trichocyst matrix protein T2-B 1">
    <location>
        <begin position="49"/>
        <end position="183"/>
    </location>
</feature>
<feature type="propeptide" id="PRO_0000307850" evidence="1">
    <location>
        <begin position="184"/>
        <end position="238"/>
    </location>
</feature>
<feature type="chain" id="PRO_0000307851" description="Trichocyst matrix protein T2-B 2">
    <location>
        <begin position="239"/>
        <end position="386"/>
    </location>
</feature>
<feature type="coiled-coil region" evidence="2">
    <location>
        <begin position="51"/>
        <end position="154"/>
    </location>
</feature>
<feature type="coiled-coil region" evidence="2">
    <location>
        <begin position="294"/>
        <end position="325"/>
    </location>
</feature>
<name>T2B_PARTE</name>
<organism>
    <name type="scientific">Paramecium tetraurelia</name>
    <dbReference type="NCBI Taxonomy" id="5888"/>
    <lineage>
        <taxon>Eukaryota</taxon>
        <taxon>Sar</taxon>
        <taxon>Alveolata</taxon>
        <taxon>Ciliophora</taxon>
        <taxon>Intramacronucleata</taxon>
        <taxon>Oligohymenophorea</taxon>
        <taxon>Peniculida</taxon>
        <taxon>Parameciidae</taxon>
        <taxon>Paramecium</taxon>
    </lineage>
</organism>
<keyword id="KW-0175">Coiled coil</keyword>
<keyword id="KW-0903">Direct protein sequencing</keyword>
<keyword id="KW-1185">Reference proteome</keyword>
<keyword id="KW-0732">Signal</keyword>
<proteinExistence type="evidence at protein level"/>
<gene>
    <name type="primary">T2B</name>
    <name type="ORF">GSPATT00011919001</name>
</gene>
<evidence type="ECO:0000250" key="1"/>
<evidence type="ECO:0000255" key="2"/>
<evidence type="ECO:0000305" key="3"/>
<comment type="function">
    <text>Structural protein that crystallize inside the trichocyst matrix.</text>
</comment>
<comment type="subcellular location">
    <subcellularLocation>
        <location>Trichocyst</location>
    </subcellularLocation>
    <text>These are architecturally complex secretory storage granules-docked at the plasma membrane, ready to rapidly respond to an exocytotic stimulus.</text>
</comment>
<comment type="similarity">
    <text evidence="3">Belongs to the TMP family.</text>
</comment>
<comment type="online information" name="Protein Spotlight">
    <link uri="https://www.proteinspotlight.org/back_issues/003"/>
    <text>The arsenal of Paramecium - Issue 3 of October 2000</text>
</comment>
<reference key="1">
    <citation type="journal article" date="2006" name="Nature">
        <title>Global trends of whole-genome duplications revealed by the ciliate Paramecium tetraurelia.</title>
        <authorList>
            <person name="Aury J.-M."/>
            <person name="Jaillon O."/>
            <person name="Duret L."/>
            <person name="Noel B."/>
            <person name="Jubin C."/>
            <person name="Porcel B.M."/>
            <person name="Segurens B."/>
            <person name="Daubin V."/>
            <person name="Anthouard V."/>
            <person name="Aiach N."/>
            <person name="Arnaiz O."/>
            <person name="Billaut A."/>
            <person name="Beisson J."/>
            <person name="Blanc I."/>
            <person name="Bouhouche K."/>
            <person name="Camara F."/>
            <person name="Duharcourt S."/>
            <person name="Guigo R."/>
            <person name="Gogendeau D."/>
            <person name="Katinka M."/>
            <person name="Keller A.-M."/>
            <person name="Kissmehl R."/>
            <person name="Klotz C."/>
            <person name="Koll F."/>
            <person name="Le Mouel A."/>
            <person name="Lepere G."/>
            <person name="Malinsky S."/>
            <person name="Nowacki M."/>
            <person name="Nowak J.K."/>
            <person name="Plattner H."/>
            <person name="Poulain J."/>
            <person name="Ruiz F."/>
            <person name="Serrano V."/>
            <person name="Zagulski M."/>
            <person name="Dessen P."/>
            <person name="Betermier M."/>
            <person name="Weissenbach J."/>
            <person name="Scarpelli C."/>
            <person name="Schaechter V."/>
            <person name="Sperling L."/>
            <person name="Meyer E."/>
            <person name="Cohen J."/>
            <person name="Wincker P."/>
        </authorList>
    </citation>
    <scope>NUCLEOTIDE SEQUENCE [LARGE SCALE GENOMIC DNA]</scope>
    <source>
        <strain>Stock d4-2</strain>
    </source>
</reference>
<reference key="2">
    <citation type="journal article" date="1995" name="Mol. Biol. Cell">
        <title>A large multigene family codes for the polypeptides of the crystalline trichocyst matrix in Paramecium.</title>
        <authorList>
            <person name="Madeddu L."/>
            <person name="Gautier M.-C."/>
            <person name="Vayssie L."/>
            <person name="Houari A."/>
            <person name="Sperling L."/>
        </authorList>
    </citation>
    <scope>NUCLEOTIDE SEQUENCE [GENOMIC DNA] OF 49-71</scope>
    <source>
        <strain>Stock d4-2</strain>
    </source>
</reference>
<reference key="3">
    <citation type="journal article" date="1994" name="Biochimie">
        <title>Protein processing and morphogenesis of secretory granules in Paramecium.</title>
        <authorList>
            <person name="Madeddu L."/>
            <person name="Gautier M.-C."/>
            <person name="le Caer J.-P."/>
            <person name="de Loubresse N."/>
            <person name="Sperling L."/>
        </authorList>
    </citation>
    <scope>PARTIAL PROTEIN SEQUENCE</scope>
    <source>
        <strain>Stock d4-2</strain>
    </source>
</reference>
<dbReference type="EMBL" id="CT868230">
    <property type="protein sequence ID" value="CAK76346.1"/>
    <property type="molecule type" value="Genomic_DNA"/>
</dbReference>
<dbReference type="EMBL" id="U27510">
    <property type="protein sequence ID" value="AAA92610.1"/>
    <property type="molecule type" value="Genomic_DNA"/>
</dbReference>
<dbReference type="RefSeq" id="XP_001443743.1">
    <property type="nucleotide sequence ID" value="XM_001443706.1"/>
</dbReference>
<dbReference type="SMR" id="Q27174"/>
<dbReference type="EnsemblProtists" id="CAK76346">
    <property type="protein sequence ID" value="CAK76346"/>
    <property type="gene ID" value="GSPATT00011919001"/>
</dbReference>
<dbReference type="GeneID" id="5029528"/>
<dbReference type="KEGG" id="ptm:GSPATT00011919001"/>
<dbReference type="eggNOG" id="ENOG502SUHG">
    <property type="taxonomic scope" value="Eukaryota"/>
</dbReference>
<dbReference type="HOGENOM" id="CLU_062544_0_0_1"/>
<dbReference type="InParanoid" id="Q27174"/>
<dbReference type="OMA" id="AKQPHKF"/>
<dbReference type="OrthoDB" id="294361at2759"/>
<dbReference type="Proteomes" id="UP000000600">
    <property type="component" value="Partially assembled WGS sequence"/>
</dbReference>
<dbReference type="GO" id="GO:0055039">
    <property type="term" value="C:trichocyst"/>
    <property type="evidence" value="ECO:0007669"/>
    <property type="project" value="UniProtKB-SubCell"/>
</dbReference>
<protein>
    <recommendedName>
        <fullName>Trichocyst matrix protein T2-B</fullName>
    </recommendedName>
    <alternativeName>
        <fullName>Secretory granule protein T2-B</fullName>
    </alternativeName>
    <alternativeName>
        <fullName>TMP 2-B</fullName>
    </alternativeName>
    <component>
        <recommendedName>
            <fullName>Trichocyst matrix protein T2-B 1</fullName>
        </recommendedName>
    </component>
    <component>
        <recommendedName>
            <fullName>Trichocyst matrix protein T2-B 2</fullName>
        </recommendedName>
    </component>
</protein>
<accession>Q27174</accession>
<accession>A0CZX9</accession>